<feature type="chain" id="PRO_0000116772" description="Uncharacterized protein C1734.10c">
    <location>
        <begin position="1"/>
        <end position="332"/>
    </location>
</feature>
<gene>
    <name type="ORF">SPBC1734.10c</name>
</gene>
<organism>
    <name type="scientific">Schizosaccharomyces pombe (strain 972 / ATCC 24843)</name>
    <name type="common">Fission yeast</name>
    <dbReference type="NCBI Taxonomy" id="284812"/>
    <lineage>
        <taxon>Eukaryota</taxon>
        <taxon>Fungi</taxon>
        <taxon>Dikarya</taxon>
        <taxon>Ascomycota</taxon>
        <taxon>Taphrinomycotina</taxon>
        <taxon>Schizosaccharomycetes</taxon>
        <taxon>Schizosaccharomycetales</taxon>
        <taxon>Schizosaccharomycetaceae</taxon>
        <taxon>Schizosaccharomyces</taxon>
    </lineage>
</organism>
<sequence>MLAEYLVHVGRVNVFLDPETKDIPKCVADLKFPLPLTLSRSTPINPIIRSDTIQLVISCPPVTYSDEIQVPWKAIDLNKDDAVKSTIKCKQCQSFLTSISSWKDLPSANWMEMLDCWSCHTDYPTVLSKRGGPSMFQPTDDCAYLGTSYVLIRLQSLEGKVAYGPNFKLHCSFCNAELGLPNNKDSSNGVRLDKSSICIDDQKIHPSFIVASEILTLRDMYATHKFVIVDGERSIWTWCFVPHLPISFQKSPFSSIEFANSPISTIKLLYQLEVPPDFTKSSEDWMDIPVSSHAFDEISHVLEKGNLSFPVSAQKFGPWKVGLLPKFHKQMI</sequence>
<reference key="1">
    <citation type="journal article" date="2002" name="Nature">
        <title>The genome sequence of Schizosaccharomyces pombe.</title>
        <authorList>
            <person name="Wood V."/>
            <person name="Gwilliam R."/>
            <person name="Rajandream M.A."/>
            <person name="Lyne M.H."/>
            <person name="Lyne R."/>
            <person name="Stewart A."/>
            <person name="Sgouros J.G."/>
            <person name="Peat N."/>
            <person name="Hayles J."/>
            <person name="Baker S.G."/>
            <person name="Basham D."/>
            <person name="Bowman S."/>
            <person name="Brooks K."/>
            <person name="Brown D."/>
            <person name="Brown S."/>
            <person name="Chillingworth T."/>
            <person name="Churcher C.M."/>
            <person name="Collins M."/>
            <person name="Connor R."/>
            <person name="Cronin A."/>
            <person name="Davis P."/>
            <person name="Feltwell T."/>
            <person name="Fraser A."/>
            <person name="Gentles S."/>
            <person name="Goble A."/>
            <person name="Hamlin N."/>
            <person name="Harris D.E."/>
            <person name="Hidalgo J."/>
            <person name="Hodgson G."/>
            <person name="Holroyd S."/>
            <person name="Hornsby T."/>
            <person name="Howarth S."/>
            <person name="Huckle E.J."/>
            <person name="Hunt S."/>
            <person name="Jagels K."/>
            <person name="James K.D."/>
            <person name="Jones L."/>
            <person name="Jones M."/>
            <person name="Leather S."/>
            <person name="McDonald S."/>
            <person name="McLean J."/>
            <person name="Mooney P."/>
            <person name="Moule S."/>
            <person name="Mungall K.L."/>
            <person name="Murphy L.D."/>
            <person name="Niblett D."/>
            <person name="Odell C."/>
            <person name="Oliver K."/>
            <person name="O'Neil S."/>
            <person name="Pearson D."/>
            <person name="Quail M.A."/>
            <person name="Rabbinowitsch E."/>
            <person name="Rutherford K.M."/>
            <person name="Rutter S."/>
            <person name="Saunders D."/>
            <person name="Seeger K."/>
            <person name="Sharp S."/>
            <person name="Skelton J."/>
            <person name="Simmonds M.N."/>
            <person name="Squares R."/>
            <person name="Squares S."/>
            <person name="Stevens K."/>
            <person name="Taylor K."/>
            <person name="Taylor R.G."/>
            <person name="Tivey A."/>
            <person name="Walsh S.V."/>
            <person name="Warren T."/>
            <person name="Whitehead S."/>
            <person name="Woodward J.R."/>
            <person name="Volckaert G."/>
            <person name="Aert R."/>
            <person name="Robben J."/>
            <person name="Grymonprez B."/>
            <person name="Weltjens I."/>
            <person name="Vanstreels E."/>
            <person name="Rieger M."/>
            <person name="Schaefer M."/>
            <person name="Mueller-Auer S."/>
            <person name="Gabel C."/>
            <person name="Fuchs M."/>
            <person name="Duesterhoeft A."/>
            <person name="Fritzc C."/>
            <person name="Holzer E."/>
            <person name="Moestl D."/>
            <person name="Hilbert H."/>
            <person name="Borzym K."/>
            <person name="Langer I."/>
            <person name="Beck A."/>
            <person name="Lehrach H."/>
            <person name="Reinhardt R."/>
            <person name="Pohl T.M."/>
            <person name="Eger P."/>
            <person name="Zimmermann W."/>
            <person name="Wedler H."/>
            <person name="Wambutt R."/>
            <person name="Purnelle B."/>
            <person name="Goffeau A."/>
            <person name="Cadieu E."/>
            <person name="Dreano S."/>
            <person name="Gloux S."/>
            <person name="Lelaure V."/>
            <person name="Mottier S."/>
            <person name="Galibert F."/>
            <person name="Aves S.J."/>
            <person name="Xiang Z."/>
            <person name="Hunt C."/>
            <person name="Moore K."/>
            <person name="Hurst S.M."/>
            <person name="Lucas M."/>
            <person name="Rochet M."/>
            <person name="Gaillardin C."/>
            <person name="Tallada V.A."/>
            <person name="Garzon A."/>
            <person name="Thode G."/>
            <person name="Daga R.R."/>
            <person name="Cruzado L."/>
            <person name="Jimenez J."/>
            <person name="Sanchez M."/>
            <person name="del Rey F."/>
            <person name="Benito J."/>
            <person name="Dominguez A."/>
            <person name="Revuelta J.L."/>
            <person name="Moreno S."/>
            <person name="Armstrong J."/>
            <person name="Forsburg S.L."/>
            <person name="Cerutti L."/>
            <person name="Lowe T."/>
            <person name="McCombie W.R."/>
            <person name="Paulsen I."/>
            <person name="Potashkin J."/>
            <person name="Shpakovski G.V."/>
            <person name="Ussery D."/>
            <person name="Barrell B.G."/>
            <person name="Nurse P."/>
        </authorList>
    </citation>
    <scope>NUCLEOTIDE SEQUENCE [LARGE SCALE GENOMIC DNA]</scope>
    <source>
        <strain>972 / ATCC 24843</strain>
    </source>
</reference>
<name>YHFA_SCHPO</name>
<proteinExistence type="predicted"/>
<keyword id="KW-1185">Reference proteome</keyword>
<dbReference type="EMBL" id="CU329671">
    <property type="protein sequence ID" value="CAA21304.1"/>
    <property type="molecule type" value="Genomic_DNA"/>
</dbReference>
<dbReference type="PIR" id="T39657">
    <property type="entry name" value="T39657"/>
</dbReference>
<dbReference type="BioGRID" id="276432">
    <property type="interactions" value="2"/>
</dbReference>
<dbReference type="FunCoup" id="O74751">
    <property type="interactions" value="12"/>
</dbReference>
<dbReference type="STRING" id="284812.O74751"/>
<dbReference type="PaxDb" id="4896-SPBC1734.10c.1"/>
<dbReference type="EnsemblFungi" id="SPBC1734.10c.1">
    <property type="protein sequence ID" value="SPBC1734.10c.1:pep"/>
    <property type="gene ID" value="SPBC1734.10c"/>
</dbReference>
<dbReference type="KEGG" id="spo:2539886"/>
<dbReference type="PomBase" id="SPBC1734.10c"/>
<dbReference type="VEuPathDB" id="FungiDB:SPBC1734.10c"/>
<dbReference type="eggNOG" id="KOG4784">
    <property type="taxonomic scope" value="Eukaryota"/>
</dbReference>
<dbReference type="HOGENOM" id="CLU_858314_0_0_1"/>
<dbReference type="InParanoid" id="O74751"/>
<dbReference type="OMA" id="QAMKVFY"/>
<dbReference type="PhylomeDB" id="O74751"/>
<dbReference type="Reactome" id="R-SPO-983168">
    <property type="pathway name" value="Antigen processing: Ubiquitination &amp; Proteasome degradation"/>
</dbReference>
<dbReference type="PRO" id="PR:O74751"/>
<dbReference type="Proteomes" id="UP000002485">
    <property type="component" value="Chromosome II"/>
</dbReference>
<dbReference type="GO" id="GO:0005829">
    <property type="term" value="C:cytosol"/>
    <property type="evidence" value="ECO:0007005"/>
    <property type="project" value="PomBase"/>
</dbReference>
<dbReference type="GO" id="GO:0005634">
    <property type="term" value="C:nucleus"/>
    <property type="evidence" value="ECO:0007005"/>
    <property type="project" value="PomBase"/>
</dbReference>
<dbReference type="GO" id="GO:0000151">
    <property type="term" value="C:ubiquitin ligase complex"/>
    <property type="evidence" value="ECO:0000318"/>
    <property type="project" value="GO_Central"/>
</dbReference>
<dbReference type="GO" id="GO:0030332">
    <property type="term" value="F:cyclin binding"/>
    <property type="evidence" value="ECO:0000318"/>
    <property type="project" value="GO_Central"/>
</dbReference>
<dbReference type="GO" id="GO:0031624">
    <property type="term" value="F:ubiquitin conjugating enzyme binding"/>
    <property type="evidence" value="ECO:0000318"/>
    <property type="project" value="GO_Central"/>
</dbReference>
<dbReference type="GO" id="GO:0061630">
    <property type="term" value="F:ubiquitin protein ligase activity"/>
    <property type="evidence" value="ECO:0000318"/>
    <property type="project" value="GO_Central"/>
</dbReference>
<dbReference type="GO" id="GO:0180010">
    <property type="term" value="P:co-transcriptional mRNA 3'-end processing, cleavage and polyadenylation pathway"/>
    <property type="evidence" value="ECO:0000266"/>
    <property type="project" value="PomBase"/>
</dbReference>
<dbReference type="GO" id="GO:0043161">
    <property type="term" value="P:proteasome-mediated ubiquitin-dependent protein catabolic process"/>
    <property type="evidence" value="ECO:0000318"/>
    <property type="project" value="GO_Central"/>
</dbReference>
<dbReference type="GO" id="GO:0051865">
    <property type="term" value="P:protein autoubiquitination"/>
    <property type="evidence" value="ECO:0000318"/>
    <property type="project" value="GO_Central"/>
</dbReference>
<dbReference type="GO" id="GO:0006513">
    <property type="term" value="P:protein monoubiquitination"/>
    <property type="evidence" value="ECO:0000318"/>
    <property type="project" value="GO_Central"/>
</dbReference>
<dbReference type="GO" id="GO:0000209">
    <property type="term" value="P:protein polyubiquitination"/>
    <property type="evidence" value="ECO:0000318"/>
    <property type="project" value="GO_Central"/>
</dbReference>
<dbReference type="InterPro" id="IPR019193">
    <property type="entry name" value="UBQ-conj_enz_E2-bd_prot"/>
</dbReference>
<dbReference type="PANTHER" id="PTHR31531:SF2">
    <property type="entry name" value="E3 UBIQUITIN-PROTEIN LIGASE E3D"/>
    <property type="match status" value="1"/>
</dbReference>
<dbReference type="PANTHER" id="PTHR31531">
    <property type="entry name" value="E3 UBIQUITIN-PROTEIN LIGASE E3D FAMILY MEMBER"/>
    <property type="match status" value="1"/>
</dbReference>
<dbReference type="Pfam" id="PF09814">
    <property type="entry name" value="HECT_2"/>
    <property type="match status" value="1"/>
</dbReference>
<accession>O74751</accession>
<protein>
    <recommendedName>
        <fullName>Uncharacterized protein C1734.10c</fullName>
    </recommendedName>
</protein>